<gene>
    <name evidence="1" type="primary">nuoC</name>
    <name evidence="1" type="synonym">nuoCD</name>
    <name evidence="1" type="synonym">nuoD</name>
    <name type="ordered locus">ACICU_00711</name>
</gene>
<dbReference type="EC" id="7.1.1.-" evidence="1"/>
<dbReference type="EMBL" id="CP000863">
    <property type="protein sequence ID" value="ACC56023.1"/>
    <property type="molecule type" value="Genomic_DNA"/>
</dbReference>
<dbReference type="RefSeq" id="WP_000852150.1">
    <property type="nucleotide sequence ID" value="NZ_CP031380.1"/>
</dbReference>
<dbReference type="SMR" id="B2HU43"/>
<dbReference type="GeneID" id="92892684"/>
<dbReference type="KEGG" id="abc:ACICU_00711"/>
<dbReference type="HOGENOM" id="CLU_015134_3_2_6"/>
<dbReference type="Proteomes" id="UP000008839">
    <property type="component" value="Chromosome"/>
</dbReference>
<dbReference type="GO" id="GO:0030964">
    <property type="term" value="C:NADH dehydrogenase complex"/>
    <property type="evidence" value="ECO:0007669"/>
    <property type="project" value="InterPro"/>
</dbReference>
<dbReference type="GO" id="GO:0005886">
    <property type="term" value="C:plasma membrane"/>
    <property type="evidence" value="ECO:0007669"/>
    <property type="project" value="UniProtKB-SubCell"/>
</dbReference>
<dbReference type="GO" id="GO:0051287">
    <property type="term" value="F:NAD binding"/>
    <property type="evidence" value="ECO:0007669"/>
    <property type="project" value="InterPro"/>
</dbReference>
<dbReference type="GO" id="GO:0008137">
    <property type="term" value="F:NADH dehydrogenase (ubiquinone) activity"/>
    <property type="evidence" value="ECO:0007669"/>
    <property type="project" value="InterPro"/>
</dbReference>
<dbReference type="GO" id="GO:0050136">
    <property type="term" value="F:NADH:ubiquinone reductase (non-electrogenic) activity"/>
    <property type="evidence" value="ECO:0007669"/>
    <property type="project" value="UniProtKB-UniRule"/>
</dbReference>
<dbReference type="GO" id="GO:0048038">
    <property type="term" value="F:quinone binding"/>
    <property type="evidence" value="ECO:0007669"/>
    <property type="project" value="UniProtKB-KW"/>
</dbReference>
<dbReference type="FunFam" id="1.10.645.10:FF:000001">
    <property type="entry name" value="NADH-quinone oxidoreductase subunit C/D"/>
    <property type="match status" value="1"/>
</dbReference>
<dbReference type="Gene3D" id="1.10.645.10">
    <property type="entry name" value="Cytochrome-c3 Hydrogenase, chain B"/>
    <property type="match status" value="1"/>
</dbReference>
<dbReference type="Gene3D" id="3.30.460.80">
    <property type="entry name" value="NADH:ubiquinone oxidoreductase, 30kDa subunit"/>
    <property type="match status" value="1"/>
</dbReference>
<dbReference type="HAMAP" id="MF_01357">
    <property type="entry name" value="NDH1_NuoC"/>
    <property type="match status" value="1"/>
</dbReference>
<dbReference type="HAMAP" id="MF_01359">
    <property type="entry name" value="NDH1_NuoCD_1"/>
    <property type="match status" value="1"/>
</dbReference>
<dbReference type="HAMAP" id="MF_01358">
    <property type="entry name" value="NDH1_NuoD"/>
    <property type="match status" value="1"/>
</dbReference>
<dbReference type="InterPro" id="IPR010218">
    <property type="entry name" value="NADH_DH_suC"/>
</dbReference>
<dbReference type="InterPro" id="IPR023062">
    <property type="entry name" value="NADH_DH_suCD"/>
</dbReference>
<dbReference type="InterPro" id="IPR001135">
    <property type="entry name" value="NADH_Q_OxRdtase_suD"/>
</dbReference>
<dbReference type="InterPro" id="IPR037232">
    <property type="entry name" value="NADH_quin_OxRdtase_su_C/D-like"/>
</dbReference>
<dbReference type="InterPro" id="IPR001268">
    <property type="entry name" value="NADH_UbQ_OxRdtase_30kDa_su"/>
</dbReference>
<dbReference type="InterPro" id="IPR014029">
    <property type="entry name" value="NADH_UbQ_OxRdtase_49kDa_CS"/>
</dbReference>
<dbReference type="InterPro" id="IPR020396">
    <property type="entry name" value="NADH_UbQ_OxRdtase_CS"/>
</dbReference>
<dbReference type="InterPro" id="IPR022885">
    <property type="entry name" value="NDH1_su_D/H"/>
</dbReference>
<dbReference type="InterPro" id="IPR029014">
    <property type="entry name" value="NiFe-Hase_large"/>
</dbReference>
<dbReference type="NCBIfam" id="TIGR01961">
    <property type="entry name" value="NuoC_fam"/>
    <property type="match status" value="1"/>
</dbReference>
<dbReference type="NCBIfam" id="TIGR01962">
    <property type="entry name" value="NuoD"/>
    <property type="match status" value="1"/>
</dbReference>
<dbReference type="NCBIfam" id="NF004739">
    <property type="entry name" value="PRK06075.1"/>
    <property type="match status" value="1"/>
</dbReference>
<dbReference type="NCBIfam" id="NF008728">
    <property type="entry name" value="PRK11742.1"/>
    <property type="match status" value="1"/>
</dbReference>
<dbReference type="PANTHER" id="PTHR11993:SF45">
    <property type="entry name" value="NADH-QUINONE OXIDOREDUCTASE SUBUNIT C_D"/>
    <property type="match status" value="1"/>
</dbReference>
<dbReference type="PANTHER" id="PTHR11993">
    <property type="entry name" value="NADH-UBIQUINONE OXIDOREDUCTASE 49 KDA SUBUNIT"/>
    <property type="match status" value="1"/>
</dbReference>
<dbReference type="Pfam" id="PF00329">
    <property type="entry name" value="Complex1_30kDa"/>
    <property type="match status" value="1"/>
</dbReference>
<dbReference type="Pfam" id="PF00346">
    <property type="entry name" value="Complex1_49kDa"/>
    <property type="match status" value="1"/>
</dbReference>
<dbReference type="SUPFAM" id="SSF56762">
    <property type="entry name" value="HydB/Nqo4-like"/>
    <property type="match status" value="1"/>
</dbReference>
<dbReference type="SUPFAM" id="SSF143243">
    <property type="entry name" value="Nqo5-like"/>
    <property type="match status" value="1"/>
</dbReference>
<dbReference type="PROSITE" id="PS00542">
    <property type="entry name" value="COMPLEX1_30K"/>
    <property type="match status" value="1"/>
</dbReference>
<dbReference type="PROSITE" id="PS00535">
    <property type="entry name" value="COMPLEX1_49K"/>
    <property type="match status" value="1"/>
</dbReference>
<sequence>MAETDIAMPESTPVDSRPAFAIVEELKTKFGENFYVQATFEEFPTVWVERARVQEVLMFLRKVERPYVMLFDLSAMDERLRQHRDGLPASDFTVFYHLLSLERNSDIRIKVALNENDLNLPTATNIWPNANWYEREAYDMFGINFEGHPMLRRILLPTYWEGHPLRKEYSARATEYTPYMQDKAKQDFEQEHLRFVPEDWGLKRGNADEDFMFLNLGPNHPSAHGAFRIVLQLDGEEVKDCVPDIGYHHRGVEKMAERQTWHSFIPYTDRVDYLGGCAQNMPYVMAVEQLAGIKVPERAQVIRVMLNELFRINNHLLYCGTAIQDAGGMTPVFYMFADRQKVYDIVEAITGYRMHPAWFRIGGTAHDLPNNWQKLVKELLDWMPKRLNEYYTAAFKNSVFIGRTRNVAQYDAKSALAWGVTGTGLRATGIDFDVRKYRPYSGYENFDFEVPVEYEGDAYARVLVHFREIEQSLKIIKQCLDNMPSGPYKADHPLAVPPPKDKTLQDIETLITHFLSVSWGPVMPAGEASFMTEVVKGASTYYLTSDKATMSYRTRIRTPTFTHLQQIPSVINGSLVSDLIIYLATIDVVMADVDR</sequence>
<protein>
    <recommendedName>
        <fullName evidence="1">NADH-quinone oxidoreductase subunit C/D</fullName>
        <ecNumber evidence="1">7.1.1.-</ecNumber>
    </recommendedName>
    <alternativeName>
        <fullName evidence="1">NADH dehydrogenase I subunit C/D</fullName>
    </alternativeName>
    <alternativeName>
        <fullName evidence="1">NDH-1 subunit C/D</fullName>
    </alternativeName>
</protein>
<name>NUOCD_ACIBC</name>
<evidence type="ECO:0000255" key="1">
    <source>
        <dbReference type="HAMAP-Rule" id="MF_01359"/>
    </source>
</evidence>
<reference key="1">
    <citation type="journal article" date="2008" name="Antimicrob. Agents Chemother.">
        <title>Whole-genome pyrosequencing of an epidemic multidrug-resistant Acinetobacter baumannii strain belonging to the European clone II group.</title>
        <authorList>
            <person name="Iacono M."/>
            <person name="Villa L."/>
            <person name="Fortini D."/>
            <person name="Bordoni R."/>
            <person name="Imperi F."/>
            <person name="Bonnal R.J."/>
            <person name="Sicheritz-Ponten T."/>
            <person name="De Bellis G."/>
            <person name="Visca P."/>
            <person name="Cassone A."/>
            <person name="Carattoli A."/>
        </authorList>
    </citation>
    <scope>NUCLEOTIDE SEQUENCE [LARGE SCALE GENOMIC DNA]</scope>
    <source>
        <strain>ACICU</strain>
    </source>
</reference>
<accession>B2HU43</accession>
<proteinExistence type="inferred from homology"/>
<feature type="chain" id="PRO_0000358606" description="NADH-quinone oxidoreductase subunit C/D">
    <location>
        <begin position="1"/>
        <end position="595"/>
    </location>
</feature>
<feature type="region of interest" description="NADH dehydrogenase I subunit C" evidence="1">
    <location>
        <begin position="1"/>
        <end position="186"/>
    </location>
</feature>
<feature type="region of interest" description="NADH dehydrogenase I subunit D" evidence="1">
    <location>
        <begin position="210"/>
        <end position="595"/>
    </location>
</feature>
<comment type="function">
    <text evidence="1">NDH-1 shuttles electrons from NADH, via FMN and iron-sulfur (Fe-S) centers, to quinones in the respiratory chain. The immediate electron acceptor for the enzyme in this species is believed to be ubiquinone. Couples the redox reaction to proton translocation (for every two electrons transferred, four hydrogen ions are translocated across the cytoplasmic membrane), and thus conserves the redox energy in a proton gradient.</text>
</comment>
<comment type="catalytic activity">
    <reaction evidence="1">
        <text>a quinone + NADH + 5 H(+)(in) = a quinol + NAD(+) + 4 H(+)(out)</text>
        <dbReference type="Rhea" id="RHEA:57888"/>
        <dbReference type="ChEBI" id="CHEBI:15378"/>
        <dbReference type="ChEBI" id="CHEBI:24646"/>
        <dbReference type="ChEBI" id="CHEBI:57540"/>
        <dbReference type="ChEBI" id="CHEBI:57945"/>
        <dbReference type="ChEBI" id="CHEBI:132124"/>
    </reaction>
</comment>
<comment type="subunit">
    <text evidence="1">NDH-1 is composed of 13 different subunits. Subunits NuoB, CD, E, F, and G constitute the peripheral sector of the complex.</text>
</comment>
<comment type="subcellular location">
    <subcellularLocation>
        <location evidence="1">Cell inner membrane</location>
        <topology evidence="1">Peripheral membrane protein</topology>
        <orientation evidence="1">Cytoplasmic side</orientation>
    </subcellularLocation>
</comment>
<comment type="similarity">
    <text evidence="1">In the N-terminal section; belongs to the complex I 30 kDa subunit family.</text>
</comment>
<comment type="similarity">
    <text evidence="1">In the C-terminal section; belongs to the complex I 49 kDa subunit family.</text>
</comment>
<organism>
    <name type="scientific">Acinetobacter baumannii (strain ACICU)</name>
    <dbReference type="NCBI Taxonomy" id="405416"/>
    <lineage>
        <taxon>Bacteria</taxon>
        <taxon>Pseudomonadati</taxon>
        <taxon>Pseudomonadota</taxon>
        <taxon>Gammaproteobacteria</taxon>
        <taxon>Moraxellales</taxon>
        <taxon>Moraxellaceae</taxon>
        <taxon>Acinetobacter</taxon>
        <taxon>Acinetobacter calcoaceticus/baumannii complex</taxon>
    </lineage>
</organism>
<keyword id="KW-0997">Cell inner membrane</keyword>
<keyword id="KW-1003">Cell membrane</keyword>
<keyword id="KW-0472">Membrane</keyword>
<keyword id="KW-0511">Multifunctional enzyme</keyword>
<keyword id="KW-0520">NAD</keyword>
<keyword id="KW-0874">Quinone</keyword>
<keyword id="KW-1278">Translocase</keyword>
<keyword id="KW-0813">Transport</keyword>
<keyword id="KW-0830">Ubiquinone</keyword>